<keyword id="KW-0143">Chaperone</keyword>
<keyword id="KW-0963">Cytoplasm</keyword>
<keyword id="KW-1185">Reference proteome</keyword>
<keyword id="KW-0694">RNA-binding</keyword>
<sequence>MESTEKLTDTNAILAYLYETFPLCFVAEGETKPLKIGLFQDLAERLADDSKVSKTQLRVALRRYTSSWRYLKCIKAGAVRVDLDGNPCGELEQEHIDHAQATLKESQDKAKAKRAERSKDEGDAADKAPRKPKRKPQPQARRDAKPAAKDKPKAAPKAPAVPINLVPAKLEELKVAQRVNVKLGMSPVAGSIVDINKGDVHVQLDSGLTVKVRAEYILL</sequence>
<reference key="1">
    <citation type="submission" date="2006-12" db="EMBL/GenBank/DDBJ databases">
        <title>Complete sequence of Shewanella amazonensis SB2B.</title>
        <authorList>
            <consortium name="US DOE Joint Genome Institute"/>
            <person name="Copeland A."/>
            <person name="Lucas S."/>
            <person name="Lapidus A."/>
            <person name="Barry K."/>
            <person name="Detter J.C."/>
            <person name="Glavina del Rio T."/>
            <person name="Hammon N."/>
            <person name="Israni S."/>
            <person name="Dalin E."/>
            <person name="Tice H."/>
            <person name="Pitluck S."/>
            <person name="Munk A.C."/>
            <person name="Brettin T."/>
            <person name="Bruce D."/>
            <person name="Han C."/>
            <person name="Tapia R."/>
            <person name="Gilna P."/>
            <person name="Schmutz J."/>
            <person name="Larimer F."/>
            <person name="Land M."/>
            <person name="Hauser L."/>
            <person name="Kyrpides N."/>
            <person name="Mikhailova N."/>
            <person name="Fredrickson J."/>
            <person name="Richardson P."/>
        </authorList>
    </citation>
    <scope>NUCLEOTIDE SEQUENCE [LARGE SCALE GENOMIC DNA]</scope>
    <source>
        <strain>ATCC BAA-1098 / SB2B</strain>
    </source>
</reference>
<organism>
    <name type="scientific">Shewanella amazonensis (strain ATCC BAA-1098 / SB2B)</name>
    <dbReference type="NCBI Taxonomy" id="326297"/>
    <lineage>
        <taxon>Bacteria</taxon>
        <taxon>Pseudomonadati</taxon>
        <taxon>Pseudomonadota</taxon>
        <taxon>Gammaproteobacteria</taxon>
        <taxon>Alteromonadales</taxon>
        <taxon>Shewanellaceae</taxon>
        <taxon>Shewanella</taxon>
    </lineage>
</organism>
<dbReference type="EMBL" id="CP000507">
    <property type="protein sequence ID" value="ABL99791.1"/>
    <property type="molecule type" value="Genomic_DNA"/>
</dbReference>
<dbReference type="RefSeq" id="WP_011759699.1">
    <property type="nucleotide sequence ID" value="NC_008700.1"/>
</dbReference>
<dbReference type="SMR" id="A1S5Y5"/>
<dbReference type="STRING" id="326297.Sama_1584"/>
<dbReference type="KEGG" id="saz:Sama_1584"/>
<dbReference type="eggNOG" id="COG3109">
    <property type="taxonomic scope" value="Bacteria"/>
</dbReference>
<dbReference type="HOGENOM" id="CLU_113254_0_0_6"/>
<dbReference type="OrthoDB" id="8421419at2"/>
<dbReference type="Proteomes" id="UP000009175">
    <property type="component" value="Chromosome"/>
</dbReference>
<dbReference type="GO" id="GO:0005829">
    <property type="term" value="C:cytosol"/>
    <property type="evidence" value="ECO:0007669"/>
    <property type="project" value="TreeGrafter"/>
</dbReference>
<dbReference type="GO" id="GO:0033592">
    <property type="term" value="F:RNA strand annealing activity"/>
    <property type="evidence" value="ECO:0007669"/>
    <property type="project" value="UniProtKB-UniRule"/>
</dbReference>
<dbReference type="GO" id="GO:0034057">
    <property type="term" value="F:RNA strand-exchange activity"/>
    <property type="evidence" value="ECO:0007669"/>
    <property type="project" value="UniProtKB-UniRule"/>
</dbReference>
<dbReference type="GO" id="GO:0010608">
    <property type="term" value="P:post-transcriptional regulation of gene expression"/>
    <property type="evidence" value="ECO:0007669"/>
    <property type="project" value="InterPro"/>
</dbReference>
<dbReference type="FunFam" id="1.10.1710.10:FF:000001">
    <property type="entry name" value="RNA chaperone ProQ"/>
    <property type="match status" value="1"/>
</dbReference>
<dbReference type="Gene3D" id="1.10.1710.10">
    <property type="entry name" value="ProQ/FinO domain"/>
    <property type="match status" value="1"/>
</dbReference>
<dbReference type="HAMAP" id="MF_00749">
    <property type="entry name" value="ProQ"/>
    <property type="match status" value="1"/>
</dbReference>
<dbReference type="InterPro" id="IPR023529">
    <property type="entry name" value="ProQ"/>
</dbReference>
<dbReference type="InterPro" id="IPR016103">
    <property type="entry name" value="ProQ/FinO"/>
</dbReference>
<dbReference type="InterPro" id="IPR036442">
    <property type="entry name" value="ProQ/FinO_sf"/>
</dbReference>
<dbReference type="InterPro" id="IPR035236">
    <property type="entry name" value="ProQ_C"/>
</dbReference>
<dbReference type="NCBIfam" id="NF003434">
    <property type="entry name" value="PRK04950.1"/>
    <property type="match status" value="1"/>
</dbReference>
<dbReference type="PANTHER" id="PTHR38106">
    <property type="entry name" value="RNA CHAPERONE PROQ"/>
    <property type="match status" value="1"/>
</dbReference>
<dbReference type="PANTHER" id="PTHR38106:SF1">
    <property type="entry name" value="RNA CHAPERONE PROQ"/>
    <property type="match status" value="1"/>
</dbReference>
<dbReference type="Pfam" id="PF04352">
    <property type="entry name" value="ProQ"/>
    <property type="match status" value="1"/>
</dbReference>
<dbReference type="Pfam" id="PF17516">
    <property type="entry name" value="ProQ_C"/>
    <property type="match status" value="1"/>
</dbReference>
<dbReference type="SMART" id="SM00945">
    <property type="entry name" value="ProQ"/>
    <property type="match status" value="1"/>
</dbReference>
<dbReference type="SUPFAM" id="SSF48657">
    <property type="entry name" value="FinO-like"/>
    <property type="match status" value="1"/>
</dbReference>
<comment type="function">
    <text evidence="1">RNA chaperone with significant RNA binding, RNA strand exchange and RNA duplexing activities.</text>
</comment>
<comment type="subcellular location">
    <subcellularLocation>
        <location evidence="1">Cytoplasm</location>
    </subcellularLocation>
</comment>
<comment type="similarity">
    <text evidence="1">Belongs to the ProQ family.</text>
</comment>
<accession>A1S5Y5</accession>
<protein>
    <recommendedName>
        <fullName evidence="1">RNA chaperone ProQ</fullName>
    </recommendedName>
</protein>
<name>PROQ_SHEAM</name>
<feature type="chain" id="PRO_0000303096" description="RNA chaperone ProQ">
    <location>
        <begin position="1"/>
        <end position="219"/>
    </location>
</feature>
<feature type="region of interest" description="Disordered" evidence="2">
    <location>
        <begin position="102"/>
        <end position="160"/>
    </location>
</feature>
<feature type="compositionally biased region" description="Basic and acidic residues" evidence="2">
    <location>
        <begin position="105"/>
        <end position="129"/>
    </location>
</feature>
<feature type="compositionally biased region" description="Basic and acidic residues" evidence="2">
    <location>
        <begin position="140"/>
        <end position="153"/>
    </location>
</feature>
<evidence type="ECO:0000255" key="1">
    <source>
        <dbReference type="HAMAP-Rule" id="MF_00749"/>
    </source>
</evidence>
<evidence type="ECO:0000256" key="2">
    <source>
        <dbReference type="SAM" id="MobiDB-lite"/>
    </source>
</evidence>
<proteinExistence type="inferred from homology"/>
<gene>
    <name evidence="1" type="primary">proQ</name>
    <name type="ordered locus">Sama_1584</name>
</gene>